<reference key="1">
    <citation type="journal article" date="1999" name="Curr. Genet.">
        <title>Organization and post-transcriptional processing of the psb B operon from chloroplasts of Populus deltoides.</title>
        <authorList>
            <person name="Dixit R."/>
            <person name="Trivedi P.K."/>
            <person name="Nath P."/>
            <person name="Sane P.V."/>
        </authorList>
    </citation>
    <scope>NUCLEOTIDE SEQUENCE [GENOMIC DNA]</scope>
    <source>
        <strain>cv. Stoneville D121</strain>
        <tissue>Leaf</tissue>
    </source>
</reference>
<protein>
    <recommendedName>
        <fullName evidence="2">Photosystem II reaction center protein H</fullName>
        <shortName evidence="2">PSII-H</shortName>
    </recommendedName>
    <alternativeName>
        <fullName evidence="2">Photosystem II 10 kDa phosphoprotein</fullName>
    </alternativeName>
</protein>
<comment type="function">
    <text evidence="2">One of the components of the core complex of photosystem II (PSII), required for its stability and/or assembly. PSII is a light-driven water:plastoquinone oxidoreductase that uses light energy to abstract electrons from H(2)O, generating O(2) and a proton gradient subsequently used for ATP formation. It consists of a core antenna complex that captures photons, and an electron transfer chain that converts photonic excitation into a charge separation.</text>
</comment>
<comment type="subunit">
    <text evidence="2">PSII is composed of 1 copy each of membrane proteins PsbA, PsbB, PsbC, PsbD, PsbE, PsbF, PsbH, PsbI, PsbJ, PsbK, PsbL, PsbM, PsbT, PsbX, PsbY, PsbZ, Psb30/Ycf12, at least 3 peripheral proteins of the oxygen-evolving complex and a large number of cofactors. It forms dimeric complexes.</text>
</comment>
<comment type="subcellular location">
    <subcellularLocation>
        <location evidence="2">Plastid</location>
        <location evidence="2">Chloroplast thylakoid membrane</location>
        <topology evidence="2">Single-pass membrane protein</topology>
    </subcellularLocation>
</comment>
<comment type="PTM">
    <text evidence="2">Phosphorylation is a light-dependent reaction catalyzed by a membrane-bound kinase; phosphorylation occurs on Thr residue(s) in the N-terminus of the protein.</text>
</comment>
<comment type="similarity">
    <text evidence="2">Belongs to the PsbH family.</text>
</comment>
<sequence>MATQSVEGSSRSGPRRTIVGDLLKPLNSEYGKVAPGWGTTPLMGVAMALFAVFLSIILEIYNSSVLLDGISMN</sequence>
<evidence type="ECO:0000250" key="1">
    <source>
        <dbReference type="UniProtKB" id="P56780"/>
    </source>
</evidence>
<evidence type="ECO:0000255" key="2">
    <source>
        <dbReference type="HAMAP-Rule" id="MF_00752"/>
    </source>
</evidence>
<geneLocation type="chloroplast"/>
<dbReference type="EMBL" id="X93203">
    <property type="protein sequence ID" value="CAA63670.1"/>
    <property type="molecule type" value="Genomic_DNA"/>
</dbReference>
<dbReference type="EMBL" id="Y13328">
    <property type="protein sequence ID" value="CAA73768.1"/>
    <property type="molecule type" value="Genomic_DNA"/>
</dbReference>
<dbReference type="RefSeq" id="YP_009555926.1">
    <property type="nucleotide sequence ID" value="NC_040929.1"/>
</dbReference>
<dbReference type="SMR" id="Q36632"/>
<dbReference type="GeneID" id="39110640"/>
<dbReference type="GO" id="GO:0009535">
    <property type="term" value="C:chloroplast thylakoid membrane"/>
    <property type="evidence" value="ECO:0007669"/>
    <property type="project" value="UniProtKB-SubCell"/>
</dbReference>
<dbReference type="GO" id="GO:0009523">
    <property type="term" value="C:photosystem II"/>
    <property type="evidence" value="ECO:0007669"/>
    <property type="project" value="UniProtKB-KW"/>
</dbReference>
<dbReference type="GO" id="GO:0042301">
    <property type="term" value="F:phosphate ion binding"/>
    <property type="evidence" value="ECO:0007669"/>
    <property type="project" value="InterPro"/>
</dbReference>
<dbReference type="GO" id="GO:0015979">
    <property type="term" value="P:photosynthesis"/>
    <property type="evidence" value="ECO:0007669"/>
    <property type="project" value="UniProtKB-UniRule"/>
</dbReference>
<dbReference type="GO" id="GO:0050821">
    <property type="term" value="P:protein stabilization"/>
    <property type="evidence" value="ECO:0007669"/>
    <property type="project" value="InterPro"/>
</dbReference>
<dbReference type="FunFam" id="1.20.5.880:FF:000001">
    <property type="entry name" value="Photosystem II reaction center protein H"/>
    <property type="match status" value="1"/>
</dbReference>
<dbReference type="Gene3D" id="1.20.5.880">
    <property type="entry name" value="Photosystem II reaction center protein H"/>
    <property type="match status" value="1"/>
</dbReference>
<dbReference type="HAMAP" id="MF_00752">
    <property type="entry name" value="PSII_PsbH"/>
    <property type="match status" value="1"/>
</dbReference>
<dbReference type="InterPro" id="IPR001056">
    <property type="entry name" value="PSII_PsbH"/>
</dbReference>
<dbReference type="InterPro" id="IPR036863">
    <property type="entry name" value="PSII_PsbH_sf"/>
</dbReference>
<dbReference type="NCBIfam" id="NF002728">
    <property type="entry name" value="PRK02624.1"/>
    <property type="match status" value="1"/>
</dbReference>
<dbReference type="PANTHER" id="PTHR34469">
    <property type="entry name" value="PHOTOSYSTEM II REACTION CENTER PROTEIN H"/>
    <property type="match status" value="1"/>
</dbReference>
<dbReference type="PANTHER" id="PTHR34469:SF4">
    <property type="entry name" value="PHOTOSYSTEM II REACTION CENTER PROTEIN H"/>
    <property type="match status" value="1"/>
</dbReference>
<dbReference type="Pfam" id="PF00737">
    <property type="entry name" value="PsbH"/>
    <property type="match status" value="1"/>
</dbReference>
<dbReference type="SUPFAM" id="SSF161025">
    <property type="entry name" value="Photosystem II 10 kDa phosphoprotein PsbH"/>
    <property type="match status" value="1"/>
</dbReference>
<feature type="initiator methionine" description="Removed" evidence="1">
    <location>
        <position position="1"/>
    </location>
</feature>
<feature type="chain" id="PRO_0000070530" description="Photosystem II reaction center protein H">
    <location>
        <begin position="2"/>
        <end position="73"/>
    </location>
</feature>
<feature type="transmembrane region" description="Helical" evidence="2">
    <location>
        <begin position="41"/>
        <end position="61"/>
    </location>
</feature>
<feature type="modified residue" description="Phosphothreonine" evidence="2">
    <location>
        <position position="3"/>
    </location>
</feature>
<name>PSBH_POPDE</name>
<accession>Q36632</accession>
<accession>O03593</accession>
<proteinExistence type="inferred from homology"/>
<keyword id="KW-0150">Chloroplast</keyword>
<keyword id="KW-0472">Membrane</keyword>
<keyword id="KW-0597">Phosphoprotein</keyword>
<keyword id="KW-0602">Photosynthesis</keyword>
<keyword id="KW-0604">Photosystem II</keyword>
<keyword id="KW-0934">Plastid</keyword>
<keyword id="KW-0793">Thylakoid</keyword>
<keyword id="KW-0812">Transmembrane</keyword>
<keyword id="KW-1133">Transmembrane helix</keyword>
<gene>
    <name evidence="2" type="primary">psbH</name>
</gene>
<organism>
    <name type="scientific">Populus deltoides</name>
    <name type="common">Eastern poplar</name>
    <name type="synonym">Eastern cottonwood</name>
    <dbReference type="NCBI Taxonomy" id="3696"/>
    <lineage>
        <taxon>Eukaryota</taxon>
        <taxon>Viridiplantae</taxon>
        <taxon>Streptophyta</taxon>
        <taxon>Embryophyta</taxon>
        <taxon>Tracheophyta</taxon>
        <taxon>Spermatophyta</taxon>
        <taxon>Magnoliopsida</taxon>
        <taxon>eudicotyledons</taxon>
        <taxon>Gunneridae</taxon>
        <taxon>Pentapetalae</taxon>
        <taxon>rosids</taxon>
        <taxon>fabids</taxon>
        <taxon>Malpighiales</taxon>
        <taxon>Salicaceae</taxon>
        <taxon>Saliceae</taxon>
        <taxon>Populus</taxon>
    </lineage>
</organism>